<keyword id="KW-0217">Developmental protein</keyword>
<keyword id="KW-0238">DNA-binding</keyword>
<keyword id="KW-0371">Homeobox</keyword>
<keyword id="KW-0539">Nucleus</keyword>
<keyword id="KW-1267">Proteomics identification</keyword>
<keyword id="KW-1185">Reference proteome</keyword>
<keyword id="KW-0804">Transcription</keyword>
<keyword id="KW-0805">Transcription regulation</keyword>
<comment type="function">
    <text>Sequence-specific transcription factor which is part of a developmental regulatory system that provides cells with specific positional identities on the anterior-posterior axis.</text>
</comment>
<comment type="subunit">
    <text evidence="5">Forms a DNA-binding heterodimer with transcription factor PBX1.</text>
</comment>
<comment type="interaction">
    <interactant intactId="EBI-12822515">
        <id>P09016</id>
    </interactant>
    <interactant intactId="EBI-2339898">
        <id>Q9NW38</id>
        <label>FANCL</label>
    </interactant>
    <organismsDiffer>false</organismsDiffer>
    <experiments>3</experiments>
</comment>
<comment type="interaction">
    <interactant intactId="EBI-12822515">
        <id>P09016</id>
    </interactant>
    <interactant intactId="EBI-10302990">
        <id>Q9BYU1</id>
        <label>PBX4</label>
    </interactant>
    <organismsDiffer>false</organismsDiffer>
    <experiments>3</experiments>
</comment>
<comment type="subcellular location">
    <subcellularLocation>
        <location>Nucleus</location>
    </subcellularLocation>
</comment>
<comment type="similarity">
    <text evidence="6">Belongs to the Antp homeobox family. Deformed subfamily.</text>
</comment>
<protein>
    <recommendedName>
        <fullName>Homeobox protein Hox-D4</fullName>
    </recommendedName>
    <alternativeName>
        <fullName>Homeobox protein HHO.C13</fullName>
    </alternativeName>
    <alternativeName>
        <fullName>Homeobox protein Hox-4B</fullName>
    </alternativeName>
    <alternativeName>
        <fullName>Homeobox protein Hox-5.1</fullName>
    </alternativeName>
</protein>
<feature type="chain" id="PRO_0000200210" description="Homeobox protein Hox-D4">
    <location>
        <begin position="1"/>
        <end position="255"/>
    </location>
</feature>
<feature type="DNA-binding region" description="Homeobox" evidence="1">
    <location>
        <begin position="154"/>
        <end position="213"/>
    </location>
</feature>
<feature type="region of interest" description="Disordered" evidence="2">
    <location>
        <begin position="31"/>
        <end position="127"/>
    </location>
</feature>
<feature type="region of interest" description="Disordered" evidence="2">
    <location>
        <begin position="212"/>
        <end position="255"/>
    </location>
</feature>
<feature type="short sequence motif" description="Antp-type hexapeptide">
    <location>
        <begin position="133"/>
        <end position="138"/>
    </location>
</feature>
<feature type="compositionally biased region" description="Pro residues" evidence="2">
    <location>
        <begin position="94"/>
        <end position="107"/>
    </location>
</feature>
<feature type="compositionally biased region" description="Low complexity" evidence="2">
    <location>
        <begin position="222"/>
        <end position="234"/>
    </location>
</feature>
<feature type="compositionally biased region" description="Basic and acidic residues" evidence="2">
    <location>
        <begin position="245"/>
        <end position="255"/>
    </location>
</feature>
<feature type="sequence variant" id="VAR_067445" description="In dbSNP:rs34727427." evidence="3 4">
    <original>S</original>
    <variation>P</variation>
    <location>
        <position position="123"/>
    </location>
</feature>
<feature type="sequence conflict" description="In Ref. 2; CAA28411." evidence="6" ref="2">
    <original>V</original>
    <variation>A</variation>
    <location>
        <position position="142"/>
    </location>
</feature>
<name>HXD4_HUMAN</name>
<evidence type="ECO:0000255" key="1">
    <source>
        <dbReference type="PROSITE-ProRule" id="PRU00108"/>
    </source>
</evidence>
<evidence type="ECO:0000256" key="2">
    <source>
        <dbReference type="SAM" id="MobiDB-lite"/>
    </source>
</evidence>
<evidence type="ECO:0000269" key="3">
    <source>
    </source>
</evidence>
<evidence type="ECO:0000269" key="4">
    <source>
    </source>
</evidence>
<evidence type="ECO:0000269" key="5">
    <source>
    </source>
</evidence>
<evidence type="ECO:0000305" key="6"/>
<dbReference type="EMBL" id="X17360">
    <property type="protein sequence ID" value="CAA35237.1"/>
    <property type="molecule type" value="Genomic_DNA"/>
</dbReference>
<dbReference type="EMBL" id="X04706">
    <property type="protein sequence ID" value="CAA28411.1"/>
    <property type="molecule type" value="mRNA"/>
</dbReference>
<dbReference type="EMBL" id="AK313885">
    <property type="protein sequence ID" value="BAG36610.1"/>
    <property type="molecule type" value="mRNA"/>
</dbReference>
<dbReference type="EMBL" id="BC016763">
    <property type="protein sequence ID" value="AAH16763.1"/>
    <property type="molecule type" value="mRNA"/>
</dbReference>
<dbReference type="EMBL" id="BC074797">
    <property type="protein sequence ID" value="AAH74797.1"/>
    <property type="molecule type" value="mRNA"/>
</dbReference>
<dbReference type="CCDS" id="CCDS2269.1"/>
<dbReference type="PIR" id="S10985">
    <property type="entry name" value="WJHU4B"/>
</dbReference>
<dbReference type="RefSeq" id="NP_055436.2">
    <property type="nucleotide sequence ID" value="NM_014621.2"/>
</dbReference>
<dbReference type="RefSeq" id="XP_054197634.1">
    <property type="nucleotide sequence ID" value="XM_054341659.1"/>
</dbReference>
<dbReference type="SMR" id="P09016"/>
<dbReference type="BioGRID" id="109473">
    <property type="interactions" value="27"/>
</dbReference>
<dbReference type="CORUM" id="P09016"/>
<dbReference type="ELM" id="P09016"/>
<dbReference type="FunCoup" id="P09016">
    <property type="interactions" value="436"/>
</dbReference>
<dbReference type="IntAct" id="P09016">
    <property type="interactions" value="20"/>
</dbReference>
<dbReference type="STRING" id="9606.ENSP00000302548"/>
<dbReference type="iPTMnet" id="P09016"/>
<dbReference type="PhosphoSitePlus" id="P09016"/>
<dbReference type="BioMuta" id="HOXD4"/>
<dbReference type="DMDM" id="20141491"/>
<dbReference type="jPOST" id="P09016"/>
<dbReference type="MassIVE" id="P09016"/>
<dbReference type="PaxDb" id="9606-ENSP00000302548"/>
<dbReference type="PeptideAtlas" id="P09016"/>
<dbReference type="ProteomicsDB" id="52185"/>
<dbReference type="Pumba" id="P09016"/>
<dbReference type="Antibodypedia" id="19523">
    <property type="antibodies" value="221 antibodies from 22 providers"/>
</dbReference>
<dbReference type="DNASU" id="3233"/>
<dbReference type="Ensembl" id="ENST00000306324.4">
    <property type="protein sequence ID" value="ENSP00000302548.3"/>
    <property type="gene ID" value="ENSG00000170166.6"/>
</dbReference>
<dbReference type="GeneID" id="3233"/>
<dbReference type="KEGG" id="hsa:3233"/>
<dbReference type="MANE-Select" id="ENST00000306324.4">
    <property type="protein sequence ID" value="ENSP00000302548.3"/>
    <property type="RefSeq nucleotide sequence ID" value="NM_014621.3"/>
    <property type="RefSeq protein sequence ID" value="NP_055436.2"/>
</dbReference>
<dbReference type="UCSC" id="uc002uks.4">
    <property type="organism name" value="human"/>
</dbReference>
<dbReference type="AGR" id="HGNC:5138"/>
<dbReference type="CTD" id="3233"/>
<dbReference type="DisGeNET" id="3233"/>
<dbReference type="GeneCards" id="HOXD4"/>
<dbReference type="HGNC" id="HGNC:5138">
    <property type="gene designation" value="HOXD4"/>
</dbReference>
<dbReference type="HPA" id="ENSG00000170166">
    <property type="expression patterns" value="Tissue enhanced (endometrium, epididymis)"/>
</dbReference>
<dbReference type="MalaCards" id="HOXD4"/>
<dbReference type="MIM" id="142981">
    <property type="type" value="gene+phenotype"/>
</dbReference>
<dbReference type="neXtProt" id="NX_P09016"/>
<dbReference type="OpenTargets" id="ENSG00000170166"/>
<dbReference type="PharmGKB" id="PA29412"/>
<dbReference type="VEuPathDB" id="HostDB:ENSG00000170166"/>
<dbReference type="eggNOG" id="KOG0489">
    <property type="taxonomic scope" value="Eukaryota"/>
</dbReference>
<dbReference type="GeneTree" id="ENSGT00940000157270"/>
<dbReference type="HOGENOM" id="CLU_061398_0_0_1"/>
<dbReference type="InParanoid" id="P09016"/>
<dbReference type="OMA" id="PGQGEHC"/>
<dbReference type="OrthoDB" id="6159439at2759"/>
<dbReference type="PAN-GO" id="P09016">
    <property type="GO annotations" value="6 GO annotations based on evolutionary models"/>
</dbReference>
<dbReference type="PhylomeDB" id="P09016"/>
<dbReference type="TreeFam" id="TF352857"/>
<dbReference type="PathwayCommons" id="P09016"/>
<dbReference type="Reactome" id="R-HSA-5617472">
    <property type="pathway name" value="Activation of anterior HOX genes in hindbrain development during early embryogenesis"/>
</dbReference>
<dbReference type="SignaLink" id="P09016"/>
<dbReference type="BioGRID-ORCS" id="3233">
    <property type="hits" value="7 hits in 1172 CRISPR screens"/>
</dbReference>
<dbReference type="GeneWiki" id="HOXD4"/>
<dbReference type="GenomeRNAi" id="3233"/>
<dbReference type="Pharos" id="P09016">
    <property type="development level" value="Tbio"/>
</dbReference>
<dbReference type="PRO" id="PR:P09016"/>
<dbReference type="Proteomes" id="UP000005640">
    <property type="component" value="Chromosome 2"/>
</dbReference>
<dbReference type="RNAct" id="P09016">
    <property type="molecule type" value="protein"/>
</dbReference>
<dbReference type="Bgee" id="ENSG00000170166">
    <property type="expression patterns" value="Expressed in body of uterus and 76 other cell types or tissues"/>
</dbReference>
<dbReference type="GO" id="GO:0030054">
    <property type="term" value="C:cell junction"/>
    <property type="evidence" value="ECO:0000314"/>
    <property type="project" value="HPA"/>
</dbReference>
<dbReference type="GO" id="GO:0000785">
    <property type="term" value="C:chromatin"/>
    <property type="evidence" value="ECO:0000247"/>
    <property type="project" value="NTNU_SB"/>
</dbReference>
<dbReference type="GO" id="GO:0005654">
    <property type="term" value="C:nucleoplasm"/>
    <property type="evidence" value="ECO:0000314"/>
    <property type="project" value="HPA"/>
</dbReference>
<dbReference type="GO" id="GO:0001228">
    <property type="term" value="F:DNA-binding transcription activator activity, RNA polymerase II-specific"/>
    <property type="evidence" value="ECO:0000314"/>
    <property type="project" value="NTNU_SB"/>
</dbReference>
<dbReference type="GO" id="GO:0000981">
    <property type="term" value="F:DNA-binding transcription factor activity, RNA polymerase II-specific"/>
    <property type="evidence" value="ECO:0000247"/>
    <property type="project" value="NTNU_SB"/>
</dbReference>
<dbReference type="GO" id="GO:0000978">
    <property type="term" value="F:RNA polymerase II cis-regulatory region sequence-specific DNA binding"/>
    <property type="evidence" value="ECO:0000318"/>
    <property type="project" value="GO_Central"/>
</dbReference>
<dbReference type="GO" id="GO:0000977">
    <property type="term" value="F:RNA polymerase II transcription regulatory region sequence-specific DNA binding"/>
    <property type="evidence" value="ECO:0000315"/>
    <property type="project" value="NTNU_SB"/>
</dbReference>
<dbReference type="GO" id="GO:1990837">
    <property type="term" value="F:sequence-specific double-stranded DNA binding"/>
    <property type="evidence" value="ECO:0000314"/>
    <property type="project" value="ARUK-UCL"/>
</dbReference>
<dbReference type="GO" id="GO:0009952">
    <property type="term" value="P:anterior/posterior pattern specification"/>
    <property type="evidence" value="ECO:0000318"/>
    <property type="project" value="GO_Central"/>
</dbReference>
<dbReference type="GO" id="GO:0048568">
    <property type="term" value="P:embryonic organ development"/>
    <property type="evidence" value="ECO:0000270"/>
    <property type="project" value="UniProtKB"/>
</dbReference>
<dbReference type="GO" id="GO:0048704">
    <property type="term" value="P:embryonic skeletal system morphogenesis"/>
    <property type="evidence" value="ECO:0000318"/>
    <property type="project" value="GO_Central"/>
</dbReference>
<dbReference type="GO" id="GO:0045944">
    <property type="term" value="P:positive regulation of transcription by RNA polymerase II"/>
    <property type="evidence" value="ECO:0000314"/>
    <property type="project" value="NTNU_SB"/>
</dbReference>
<dbReference type="GO" id="GO:0048863">
    <property type="term" value="P:stem cell differentiation"/>
    <property type="evidence" value="ECO:0007669"/>
    <property type="project" value="Ensembl"/>
</dbReference>
<dbReference type="CDD" id="cd00086">
    <property type="entry name" value="homeodomain"/>
    <property type="match status" value="1"/>
</dbReference>
<dbReference type="FunFam" id="1.10.10.60:FF:000029">
    <property type="entry name" value="Homeobox protein Hox-D4"/>
    <property type="match status" value="1"/>
</dbReference>
<dbReference type="Gene3D" id="1.10.10.60">
    <property type="entry name" value="Homeodomain-like"/>
    <property type="match status" value="1"/>
</dbReference>
<dbReference type="InterPro" id="IPR050609">
    <property type="entry name" value="Antp_homeobox_Deformed_sf"/>
</dbReference>
<dbReference type="InterPro" id="IPR001356">
    <property type="entry name" value="HD"/>
</dbReference>
<dbReference type="InterPro" id="IPR020479">
    <property type="entry name" value="HD_metazoa"/>
</dbReference>
<dbReference type="InterPro" id="IPR017995">
    <property type="entry name" value="Homeobox_antennapedia"/>
</dbReference>
<dbReference type="InterPro" id="IPR001827">
    <property type="entry name" value="Homeobox_Antennapedia_CS"/>
</dbReference>
<dbReference type="InterPro" id="IPR017970">
    <property type="entry name" value="Homeobox_CS"/>
</dbReference>
<dbReference type="InterPro" id="IPR009057">
    <property type="entry name" value="Homeodomain-like_sf"/>
</dbReference>
<dbReference type="PANTHER" id="PTHR45771:SF5">
    <property type="entry name" value="HOMEOBOX PROTEIN HOX-D4"/>
    <property type="match status" value="1"/>
</dbReference>
<dbReference type="PANTHER" id="PTHR45771">
    <property type="entry name" value="HOMEOTIC PROTEIN DEFORMED"/>
    <property type="match status" value="1"/>
</dbReference>
<dbReference type="Pfam" id="PF00046">
    <property type="entry name" value="Homeodomain"/>
    <property type="match status" value="1"/>
</dbReference>
<dbReference type="PRINTS" id="PR00025">
    <property type="entry name" value="ANTENNAPEDIA"/>
</dbReference>
<dbReference type="PRINTS" id="PR00024">
    <property type="entry name" value="HOMEOBOX"/>
</dbReference>
<dbReference type="SMART" id="SM00389">
    <property type="entry name" value="HOX"/>
    <property type="match status" value="1"/>
</dbReference>
<dbReference type="SUPFAM" id="SSF46689">
    <property type="entry name" value="Homeodomain-like"/>
    <property type="match status" value="1"/>
</dbReference>
<dbReference type="PROSITE" id="PS00032">
    <property type="entry name" value="ANTENNAPEDIA"/>
    <property type="match status" value="1"/>
</dbReference>
<dbReference type="PROSITE" id="PS00027">
    <property type="entry name" value="HOMEOBOX_1"/>
    <property type="match status" value="1"/>
</dbReference>
<dbReference type="PROSITE" id="PS50071">
    <property type="entry name" value="HOMEOBOX_2"/>
    <property type="match status" value="1"/>
</dbReference>
<gene>
    <name type="primary">HOXD4</name>
    <name type="synonym">HOX4B</name>
</gene>
<accession>P09016</accession>
<accession>B2R9R3</accession>
<accession>Q96AU0</accession>
<sequence length="255" mass="27885">MVMSSYMVNSKYVDPKFPPCEEYLQGGYLGEQGADYYGGGAQGADFQPPGLYPRPDFGEQPFGGSGPGPGSALPARGHGQEPGGPGGHYAAPGEPCPAPPAPPPAPLPGARAYSQSDPKQPPSGTALKQPAVVYPWMKKVHVNSVNPNYTGGEPKRSRTAYTRQQVLELEKEFHFNRYLTRRRRIEIAHTLCLSERQIKIWFQNRRMKWKKDHKLPNTKGRSSSSSSSSSCSSSVAPSQHLQPMAKDHHTDLTTL</sequence>
<organism>
    <name type="scientific">Homo sapiens</name>
    <name type="common">Human</name>
    <dbReference type="NCBI Taxonomy" id="9606"/>
    <lineage>
        <taxon>Eukaryota</taxon>
        <taxon>Metazoa</taxon>
        <taxon>Chordata</taxon>
        <taxon>Craniata</taxon>
        <taxon>Vertebrata</taxon>
        <taxon>Euteleostomi</taxon>
        <taxon>Mammalia</taxon>
        <taxon>Eutheria</taxon>
        <taxon>Euarchontoglires</taxon>
        <taxon>Primates</taxon>
        <taxon>Haplorrhini</taxon>
        <taxon>Catarrhini</taxon>
        <taxon>Hominidae</taxon>
        <taxon>Homo</taxon>
    </lineage>
</organism>
<proteinExistence type="evidence at protein level"/>
<reference key="1">
    <citation type="journal article" date="1990" name="Nucleic Acids Res.">
        <title>Molecular mechanisms underlying the expression of the human HOX-5.1 gene.</title>
        <authorList>
            <person name="Cianetti L."/>
            <person name="di Cristofaro A."/>
            <person name="Zappavigna V."/>
            <person name="Bottero L."/>
            <person name="Boccoli G."/>
            <person name="Testa U."/>
            <person name="Russo G."/>
            <person name="Boncinelli E."/>
            <person name="Peschle C."/>
        </authorList>
    </citation>
    <scope>NUCLEOTIDE SEQUENCE [GENOMIC DNA]</scope>
    <scope>VARIANT PRO-123</scope>
</reference>
<reference key="2">
    <citation type="journal article" date="1986" name="Nature">
        <title>Differential and stage-related expression in embryonic tissues of a new human homoeobox gene.</title>
        <authorList>
            <person name="Mavilio F."/>
            <person name="Simeone A."/>
            <person name="Giampaolo A."/>
            <person name="Faiella A."/>
            <person name="Zappavigna V."/>
            <person name="Acampora D."/>
            <person name="Poiana G."/>
            <person name="Russo G."/>
            <person name="Peschle C."/>
            <person name="Boncinelli E."/>
        </authorList>
    </citation>
    <scope>NUCLEOTIDE SEQUENCE [MRNA]</scope>
</reference>
<reference key="3">
    <citation type="journal article" date="2004" name="Nat. Genet.">
        <title>Complete sequencing and characterization of 21,243 full-length human cDNAs.</title>
        <authorList>
            <person name="Ota T."/>
            <person name="Suzuki Y."/>
            <person name="Nishikawa T."/>
            <person name="Otsuki T."/>
            <person name="Sugiyama T."/>
            <person name="Irie R."/>
            <person name="Wakamatsu A."/>
            <person name="Hayashi K."/>
            <person name="Sato H."/>
            <person name="Nagai K."/>
            <person name="Kimura K."/>
            <person name="Makita H."/>
            <person name="Sekine M."/>
            <person name="Obayashi M."/>
            <person name="Nishi T."/>
            <person name="Shibahara T."/>
            <person name="Tanaka T."/>
            <person name="Ishii S."/>
            <person name="Yamamoto J."/>
            <person name="Saito K."/>
            <person name="Kawai Y."/>
            <person name="Isono Y."/>
            <person name="Nakamura Y."/>
            <person name="Nagahari K."/>
            <person name="Murakami K."/>
            <person name="Yasuda T."/>
            <person name="Iwayanagi T."/>
            <person name="Wagatsuma M."/>
            <person name="Shiratori A."/>
            <person name="Sudo H."/>
            <person name="Hosoiri T."/>
            <person name="Kaku Y."/>
            <person name="Kodaira H."/>
            <person name="Kondo H."/>
            <person name="Sugawara M."/>
            <person name="Takahashi M."/>
            <person name="Kanda K."/>
            <person name="Yokoi T."/>
            <person name="Furuya T."/>
            <person name="Kikkawa E."/>
            <person name="Omura Y."/>
            <person name="Abe K."/>
            <person name="Kamihara K."/>
            <person name="Katsuta N."/>
            <person name="Sato K."/>
            <person name="Tanikawa M."/>
            <person name="Yamazaki M."/>
            <person name="Ninomiya K."/>
            <person name="Ishibashi T."/>
            <person name="Yamashita H."/>
            <person name="Murakawa K."/>
            <person name="Fujimori K."/>
            <person name="Tanai H."/>
            <person name="Kimata M."/>
            <person name="Watanabe M."/>
            <person name="Hiraoka S."/>
            <person name="Chiba Y."/>
            <person name="Ishida S."/>
            <person name="Ono Y."/>
            <person name="Takiguchi S."/>
            <person name="Watanabe S."/>
            <person name="Yosida M."/>
            <person name="Hotuta T."/>
            <person name="Kusano J."/>
            <person name="Kanehori K."/>
            <person name="Takahashi-Fujii A."/>
            <person name="Hara H."/>
            <person name="Tanase T.-O."/>
            <person name="Nomura Y."/>
            <person name="Togiya S."/>
            <person name="Komai F."/>
            <person name="Hara R."/>
            <person name="Takeuchi K."/>
            <person name="Arita M."/>
            <person name="Imose N."/>
            <person name="Musashino K."/>
            <person name="Yuuki H."/>
            <person name="Oshima A."/>
            <person name="Sasaki N."/>
            <person name="Aotsuka S."/>
            <person name="Yoshikawa Y."/>
            <person name="Matsunawa H."/>
            <person name="Ichihara T."/>
            <person name="Shiohata N."/>
            <person name="Sano S."/>
            <person name="Moriya S."/>
            <person name="Momiyama H."/>
            <person name="Satoh N."/>
            <person name="Takami S."/>
            <person name="Terashima Y."/>
            <person name="Suzuki O."/>
            <person name="Nakagawa S."/>
            <person name="Senoh A."/>
            <person name="Mizoguchi H."/>
            <person name="Goto Y."/>
            <person name="Shimizu F."/>
            <person name="Wakebe H."/>
            <person name="Hishigaki H."/>
            <person name="Watanabe T."/>
            <person name="Sugiyama A."/>
            <person name="Takemoto M."/>
            <person name="Kawakami B."/>
            <person name="Yamazaki M."/>
            <person name="Watanabe K."/>
            <person name="Kumagai A."/>
            <person name="Itakura S."/>
            <person name="Fukuzumi Y."/>
            <person name="Fujimori Y."/>
            <person name="Komiyama M."/>
            <person name="Tashiro H."/>
            <person name="Tanigami A."/>
            <person name="Fujiwara T."/>
            <person name="Ono T."/>
            <person name="Yamada K."/>
            <person name="Fujii Y."/>
            <person name="Ozaki K."/>
            <person name="Hirao M."/>
            <person name="Ohmori Y."/>
            <person name="Kawabata A."/>
            <person name="Hikiji T."/>
            <person name="Kobatake N."/>
            <person name="Inagaki H."/>
            <person name="Ikema Y."/>
            <person name="Okamoto S."/>
            <person name="Okitani R."/>
            <person name="Kawakami T."/>
            <person name="Noguchi S."/>
            <person name="Itoh T."/>
            <person name="Shigeta K."/>
            <person name="Senba T."/>
            <person name="Matsumura K."/>
            <person name="Nakajima Y."/>
            <person name="Mizuno T."/>
            <person name="Morinaga M."/>
            <person name="Sasaki M."/>
            <person name="Togashi T."/>
            <person name="Oyama M."/>
            <person name="Hata H."/>
            <person name="Watanabe M."/>
            <person name="Komatsu T."/>
            <person name="Mizushima-Sugano J."/>
            <person name="Satoh T."/>
            <person name="Shirai Y."/>
            <person name="Takahashi Y."/>
            <person name="Nakagawa K."/>
            <person name="Okumura K."/>
            <person name="Nagase T."/>
            <person name="Nomura N."/>
            <person name="Kikuchi H."/>
            <person name="Masuho Y."/>
            <person name="Yamashita R."/>
            <person name="Nakai K."/>
            <person name="Yada T."/>
            <person name="Nakamura Y."/>
            <person name="Ohara O."/>
            <person name="Isogai T."/>
            <person name="Sugano S."/>
        </authorList>
    </citation>
    <scope>NUCLEOTIDE SEQUENCE [LARGE SCALE MRNA]</scope>
    <scope>VARIANT PRO-123</scope>
    <source>
        <tissue>Uterus</tissue>
    </source>
</reference>
<reference key="4">
    <citation type="journal article" date="2004" name="Genome Res.">
        <title>The status, quality, and expansion of the NIH full-length cDNA project: the Mammalian Gene Collection (MGC).</title>
        <authorList>
            <consortium name="The MGC Project Team"/>
        </authorList>
    </citation>
    <scope>NUCLEOTIDE SEQUENCE [LARGE SCALE MRNA]</scope>
    <source>
        <tissue>Kidney</tissue>
    </source>
</reference>
<reference key="5">
    <citation type="journal article" date="1989" name="Genome">
        <title>Organization of human class I homeobox genes.</title>
        <authorList>
            <person name="Boncinelli E."/>
            <person name="Acampora D."/>
            <person name="Pannese M."/>
            <person name="D'Esposito M."/>
            <person name="Somma R."/>
            <person name="Gaudino G."/>
            <person name="Stornaiuolo A."/>
            <person name="Cafiero M."/>
            <person name="Faiella A."/>
            <person name="Simeone A."/>
        </authorList>
    </citation>
    <scope>NUCLEOTIDE SEQUENCE [GENOMIC DNA] OF 154-219</scope>
</reference>
<reference key="6">
    <citation type="journal article" date="1995" name="Mol. Cell. Biol.">
        <title>Both Pbx1 and E2A-Pbx1 bind the DNA motif ATCAATCAA cooperatively with the products of multiple murine Hox genes, some of which are themselves oncogenes.</title>
        <authorList>
            <person name="Lu Q."/>
            <person name="Knoepfler P.S."/>
            <person name="Scheele J."/>
            <person name="Wright D.D."/>
            <person name="Kamps M.P."/>
        </authorList>
    </citation>
    <scope>INTERACTION WITH PBX1</scope>
</reference>